<sequence length="230" mass="25828">MDITPDSIIYWQWQWINLNATIVFSWLVMLILVLGSWLITRNLSIEPPLSRWQVALEIIVEQIRQQIRDASQQKADQFLPFIGTLFLFITMANLLTIFPVYQSPAGSLSTTAALALCVFVAVPIYGIKNVGITNYLRHYIQPTPVMLPFNLISEISRTVSLAIRLFGNIMSTSLLVAILISIVPLFFPAVMTLFGLLVGVIQAYVFTILAMVYIASGMNLQQRKTGNHHA</sequence>
<organism>
    <name type="scientific">Crocosphaera subtropica (strain ATCC 51142 / BH68)</name>
    <name type="common">Cyanothece sp. (strain ATCC 51142)</name>
    <dbReference type="NCBI Taxonomy" id="43989"/>
    <lineage>
        <taxon>Bacteria</taxon>
        <taxon>Bacillati</taxon>
        <taxon>Cyanobacteriota</taxon>
        <taxon>Cyanophyceae</taxon>
        <taxon>Oscillatoriophycideae</taxon>
        <taxon>Chroococcales</taxon>
        <taxon>Aphanothecaceae</taxon>
        <taxon>Crocosphaera</taxon>
        <taxon>Crocosphaera subtropica</taxon>
    </lineage>
</organism>
<dbReference type="EMBL" id="CP000806">
    <property type="protein sequence ID" value="ACB50858.1"/>
    <property type="molecule type" value="Genomic_DNA"/>
</dbReference>
<dbReference type="RefSeq" id="WP_009544313.1">
    <property type="nucleotide sequence ID" value="NC_010546.1"/>
</dbReference>
<dbReference type="SMR" id="B1WXB4"/>
<dbReference type="STRING" id="43989.cce_1508"/>
<dbReference type="KEGG" id="cyt:cce_1508"/>
<dbReference type="eggNOG" id="COG0356">
    <property type="taxonomic scope" value="Bacteria"/>
</dbReference>
<dbReference type="HOGENOM" id="CLU_041018_2_2_3"/>
<dbReference type="OrthoDB" id="9789241at2"/>
<dbReference type="Proteomes" id="UP000001203">
    <property type="component" value="Chromosome circular"/>
</dbReference>
<dbReference type="GO" id="GO:0031676">
    <property type="term" value="C:plasma membrane-derived thylakoid membrane"/>
    <property type="evidence" value="ECO:0007669"/>
    <property type="project" value="UniProtKB-SubCell"/>
</dbReference>
<dbReference type="GO" id="GO:0045259">
    <property type="term" value="C:proton-transporting ATP synthase complex"/>
    <property type="evidence" value="ECO:0007669"/>
    <property type="project" value="UniProtKB-KW"/>
</dbReference>
<dbReference type="GO" id="GO:0046933">
    <property type="term" value="F:proton-transporting ATP synthase activity, rotational mechanism"/>
    <property type="evidence" value="ECO:0007669"/>
    <property type="project" value="UniProtKB-UniRule"/>
</dbReference>
<dbReference type="GO" id="GO:0042777">
    <property type="term" value="P:proton motive force-driven plasma membrane ATP synthesis"/>
    <property type="evidence" value="ECO:0007669"/>
    <property type="project" value="TreeGrafter"/>
</dbReference>
<dbReference type="CDD" id="cd00310">
    <property type="entry name" value="ATP-synt_Fo_a_6"/>
    <property type="match status" value="1"/>
</dbReference>
<dbReference type="Gene3D" id="1.20.120.220">
    <property type="entry name" value="ATP synthase, F0 complex, subunit A"/>
    <property type="match status" value="1"/>
</dbReference>
<dbReference type="HAMAP" id="MF_01393">
    <property type="entry name" value="ATP_synth_a_bact"/>
    <property type="match status" value="1"/>
</dbReference>
<dbReference type="InterPro" id="IPR017692">
    <property type="entry name" value="Alt_ATP_synth_F0_Asu"/>
</dbReference>
<dbReference type="InterPro" id="IPR045082">
    <property type="entry name" value="ATP_syn_F0_a_bact/chloroplast"/>
</dbReference>
<dbReference type="InterPro" id="IPR000568">
    <property type="entry name" value="ATP_synth_F0_asu"/>
</dbReference>
<dbReference type="InterPro" id="IPR023011">
    <property type="entry name" value="ATP_synth_F0_asu_AS"/>
</dbReference>
<dbReference type="InterPro" id="IPR035908">
    <property type="entry name" value="F0_ATP_A_sf"/>
</dbReference>
<dbReference type="NCBIfam" id="TIGR03306">
    <property type="entry name" value="altF1_A"/>
    <property type="match status" value="1"/>
</dbReference>
<dbReference type="NCBIfam" id="TIGR01131">
    <property type="entry name" value="ATP_synt_6_or_A"/>
    <property type="match status" value="1"/>
</dbReference>
<dbReference type="NCBIfam" id="NF004481">
    <property type="entry name" value="PRK05815.2-3"/>
    <property type="match status" value="1"/>
</dbReference>
<dbReference type="PANTHER" id="PTHR42823">
    <property type="entry name" value="ATP SYNTHASE SUBUNIT A, CHLOROPLASTIC"/>
    <property type="match status" value="1"/>
</dbReference>
<dbReference type="PANTHER" id="PTHR42823:SF3">
    <property type="entry name" value="ATP SYNTHASE SUBUNIT A, CHLOROPLASTIC"/>
    <property type="match status" value="1"/>
</dbReference>
<dbReference type="Pfam" id="PF00119">
    <property type="entry name" value="ATP-synt_A"/>
    <property type="match status" value="1"/>
</dbReference>
<dbReference type="PRINTS" id="PR00123">
    <property type="entry name" value="ATPASEA"/>
</dbReference>
<dbReference type="SUPFAM" id="SSF81336">
    <property type="entry name" value="F1F0 ATP synthase subunit A"/>
    <property type="match status" value="1"/>
</dbReference>
<dbReference type="PROSITE" id="PS00449">
    <property type="entry name" value="ATPASE_A"/>
    <property type="match status" value="1"/>
</dbReference>
<keyword id="KW-0066">ATP synthesis</keyword>
<keyword id="KW-0138">CF(0)</keyword>
<keyword id="KW-0375">Hydrogen ion transport</keyword>
<keyword id="KW-0406">Ion transport</keyword>
<keyword id="KW-0472">Membrane</keyword>
<keyword id="KW-1185">Reference proteome</keyword>
<keyword id="KW-0793">Thylakoid</keyword>
<keyword id="KW-0812">Transmembrane</keyword>
<keyword id="KW-1133">Transmembrane helix</keyword>
<keyword id="KW-0813">Transport</keyword>
<accession>B1WXB4</accession>
<feature type="chain" id="PRO_0000362280" description="ATP synthase subunit a 1">
    <location>
        <begin position="1"/>
        <end position="230"/>
    </location>
</feature>
<feature type="transmembrane region" description="Helical" evidence="1">
    <location>
        <begin position="20"/>
        <end position="40"/>
    </location>
</feature>
<feature type="transmembrane region" description="Helical" evidence="1">
    <location>
        <begin position="78"/>
        <end position="98"/>
    </location>
</feature>
<feature type="transmembrane region" description="Helical" evidence="1">
    <location>
        <begin position="112"/>
        <end position="132"/>
    </location>
</feature>
<feature type="transmembrane region" description="Helical" evidence="1">
    <location>
        <begin position="174"/>
        <end position="194"/>
    </location>
</feature>
<feature type="transmembrane region" description="Helical" evidence="1">
    <location>
        <begin position="195"/>
        <end position="215"/>
    </location>
</feature>
<reference key="1">
    <citation type="journal article" date="2008" name="Proc. Natl. Acad. Sci. U.S.A.">
        <title>The genome of Cyanothece 51142, a unicellular diazotrophic cyanobacterium important in the marine nitrogen cycle.</title>
        <authorList>
            <person name="Welsh E.A."/>
            <person name="Liberton M."/>
            <person name="Stoeckel J."/>
            <person name="Loh T."/>
            <person name="Elvitigala T."/>
            <person name="Wang C."/>
            <person name="Wollam A."/>
            <person name="Fulton R.S."/>
            <person name="Clifton S.W."/>
            <person name="Jacobs J.M."/>
            <person name="Aurora R."/>
            <person name="Ghosh B.K."/>
            <person name="Sherman L.A."/>
            <person name="Smith R.D."/>
            <person name="Wilson R.K."/>
            <person name="Pakrasi H.B."/>
        </authorList>
    </citation>
    <scope>NUCLEOTIDE SEQUENCE [LARGE SCALE GENOMIC DNA]</scope>
    <source>
        <strain>ATCC 51142 / BH68</strain>
    </source>
</reference>
<proteinExistence type="inferred from homology"/>
<protein>
    <recommendedName>
        <fullName evidence="1">ATP synthase subunit a 1</fullName>
    </recommendedName>
    <alternativeName>
        <fullName evidence="1">ATP synthase F0 sector subunit a 1</fullName>
    </alternativeName>
    <alternativeName>
        <fullName evidence="1">F-ATPase subunit 6 1</fullName>
    </alternativeName>
</protein>
<comment type="function">
    <text evidence="1">Key component of the proton channel; it plays a direct role in the translocation of protons across the membrane.</text>
</comment>
<comment type="subunit">
    <text evidence="1">F-type ATPases have 2 components, CF(1) - the catalytic core - and CF(0) - the membrane proton channel. CF(1) has five subunits: alpha(3), beta(3), gamma(1), delta(1), epsilon(1). CF(0) has four main subunits: a, b, b' and c.</text>
</comment>
<comment type="subcellular location">
    <subcellularLocation>
        <location evidence="1">Cellular thylakoid membrane</location>
        <topology evidence="1">Multi-pass membrane protein</topology>
    </subcellularLocation>
</comment>
<comment type="similarity">
    <text evidence="1">Belongs to the ATPase A chain family.</text>
</comment>
<evidence type="ECO:0000255" key="1">
    <source>
        <dbReference type="HAMAP-Rule" id="MF_01393"/>
    </source>
</evidence>
<gene>
    <name evidence="1" type="primary">atpB1</name>
    <name evidence="1" type="synonym">atpI1</name>
    <name type="ordered locus">cce_1508</name>
</gene>
<name>ATP61_CROS5</name>